<proteinExistence type="inferred from homology"/>
<dbReference type="EC" id="5.3.1.9" evidence="1"/>
<dbReference type="EMBL" id="CP000647">
    <property type="protein sequence ID" value="ABR79768.1"/>
    <property type="molecule type" value="Genomic_DNA"/>
</dbReference>
<dbReference type="RefSeq" id="WP_002884631.1">
    <property type="nucleotide sequence ID" value="NC_009648.1"/>
</dbReference>
<dbReference type="SMR" id="A6TGT4"/>
<dbReference type="STRING" id="272620.KPN_04413"/>
<dbReference type="jPOST" id="A6TGT4"/>
<dbReference type="PaxDb" id="272620-KPN_04413"/>
<dbReference type="EnsemblBacteria" id="ABR79768">
    <property type="protein sequence ID" value="ABR79768"/>
    <property type="gene ID" value="KPN_04413"/>
</dbReference>
<dbReference type="KEGG" id="kpn:KPN_04413"/>
<dbReference type="HOGENOM" id="CLU_017947_3_1_6"/>
<dbReference type="UniPathway" id="UPA00109">
    <property type="reaction ID" value="UER00181"/>
</dbReference>
<dbReference type="UniPathway" id="UPA00138"/>
<dbReference type="Proteomes" id="UP000000265">
    <property type="component" value="Chromosome"/>
</dbReference>
<dbReference type="GO" id="GO:0005829">
    <property type="term" value="C:cytosol"/>
    <property type="evidence" value="ECO:0007669"/>
    <property type="project" value="TreeGrafter"/>
</dbReference>
<dbReference type="GO" id="GO:0097367">
    <property type="term" value="F:carbohydrate derivative binding"/>
    <property type="evidence" value="ECO:0007669"/>
    <property type="project" value="InterPro"/>
</dbReference>
<dbReference type="GO" id="GO:0004347">
    <property type="term" value="F:glucose-6-phosphate isomerase activity"/>
    <property type="evidence" value="ECO:0007669"/>
    <property type="project" value="UniProtKB-UniRule"/>
</dbReference>
<dbReference type="GO" id="GO:0048029">
    <property type="term" value="F:monosaccharide binding"/>
    <property type="evidence" value="ECO:0007669"/>
    <property type="project" value="TreeGrafter"/>
</dbReference>
<dbReference type="GO" id="GO:0006094">
    <property type="term" value="P:gluconeogenesis"/>
    <property type="evidence" value="ECO:0007669"/>
    <property type="project" value="UniProtKB-UniRule"/>
</dbReference>
<dbReference type="GO" id="GO:0051156">
    <property type="term" value="P:glucose 6-phosphate metabolic process"/>
    <property type="evidence" value="ECO:0007669"/>
    <property type="project" value="TreeGrafter"/>
</dbReference>
<dbReference type="GO" id="GO:0006096">
    <property type="term" value="P:glycolytic process"/>
    <property type="evidence" value="ECO:0007669"/>
    <property type="project" value="UniProtKB-UniRule"/>
</dbReference>
<dbReference type="CDD" id="cd05015">
    <property type="entry name" value="SIS_PGI_1"/>
    <property type="match status" value="1"/>
</dbReference>
<dbReference type="CDD" id="cd05016">
    <property type="entry name" value="SIS_PGI_2"/>
    <property type="match status" value="1"/>
</dbReference>
<dbReference type="FunFam" id="1.10.1390.10:FF:000001">
    <property type="entry name" value="Glucose-6-phosphate isomerase"/>
    <property type="match status" value="1"/>
</dbReference>
<dbReference type="FunFam" id="3.40.50.10490:FF:000004">
    <property type="entry name" value="Glucose-6-phosphate isomerase"/>
    <property type="match status" value="1"/>
</dbReference>
<dbReference type="Gene3D" id="1.10.1390.10">
    <property type="match status" value="1"/>
</dbReference>
<dbReference type="Gene3D" id="3.40.50.10490">
    <property type="entry name" value="Glucose-6-phosphate isomerase like protein, domain 1"/>
    <property type="match status" value="2"/>
</dbReference>
<dbReference type="HAMAP" id="MF_00473">
    <property type="entry name" value="G6P_isomerase"/>
    <property type="match status" value="1"/>
</dbReference>
<dbReference type="InterPro" id="IPR001672">
    <property type="entry name" value="G6P_Isomerase"/>
</dbReference>
<dbReference type="InterPro" id="IPR023096">
    <property type="entry name" value="G6P_Isomerase_C"/>
</dbReference>
<dbReference type="InterPro" id="IPR018189">
    <property type="entry name" value="Phosphoglucose_isomerase_CS"/>
</dbReference>
<dbReference type="InterPro" id="IPR046348">
    <property type="entry name" value="SIS_dom_sf"/>
</dbReference>
<dbReference type="InterPro" id="IPR035476">
    <property type="entry name" value="SIS_PGI_1"/>
</dbReference>
<dbReference type="InterPro" id="IPR035482">
    <property type="entry name" value="SIS_PGI_2"/>
</dbReference>
<dbReference type="NCBIfam" id="NF001211">
    <property type="entry name" value="PRK00179.1"/>
    <property type="match status" value="1"/>
</dbReference>
<dbReference type="PANTHER" id="PTHR11469">
    <property type="entry name" value="GLUCOSE-6-PHOSPHATE ISOMERASE"/>
    <property type="match status" value="1"/>
</dbReference>
<dbReference type="PANTHER" id="PTHR11469:SF1">
    <property type="entry name" value="GLUCOSE-6-PHOSPHATE ISOMERASE"/>
    <property type="match status" value="1"/>
</dbReference>
<dbReference type="Pfam" id="PF00342">
    <property type="entry name" value="PGI"/>
    <property type="match status" value="1"/>
</dbReference>
<dbReference type="PRINTS" id="PR00662">
    <property type="entry name" value="G6PISOMERASE"/>
</dbReference>
<dbReference type="SUPFAM" id="SSF53697">
    <property type="entry name" value="SIS domain"/>
    <property type="match status" value="1"/>
</dbReference>
<dbReference type="PROSITE" id="PS00765">
    <property type="entry name" value="P_GLUCOSE_ISOMERASE_1"/>
    <property type="match status" value="1"/>
</dbReference>
<dbReference type="PROSITE" id="PS00174">
    <property type="entry name" value="P_GLUCOSE_ISOMERASE_2"/>
    <property type="match status" value="1"/>
</dbReference>
<dbReference type="PROSITE" id="PS51463">
    <property type="entry name" value="P_GLUCOSE_ISOMERASE_3"/>
    <property type="match status" value="1"/>
</dbReference>
<keyword id="KW-0963">Cytoplasm</keyword>
<keyword id="KW-0312">Gluconeogenesis</keyword>
<keyword id="KW-0324">Glycolysis</keyword>
<keyword id="KW-0413">Isomerase</keyword>
<protein>
    <recommendedName>
        <fullName evidence="1">Glucose-6-phosphate isomerase</fullName>
        <shortName evidence="1">GPI</shortName>
        <ecNumber evidence="1">5.3.1.9</ecNumber>
    </recommendedName>
    <alternativeName>
        <fullName evidence="1">Phosphoglucose isomerase</fullName>
        <shortName evidence="1">PGI</shortName>
    </alternativeName>
    <alternativeName>
        <fullName evidence="1">Phosphohexose isomerase</fullName>
        <shortName evidence="1">PHI</shortName>
    </alternativeName>
</protein>
<reference key="1">
    <citation type="submission" date="2006-09" db="EMBL/GenBank/DDBJ databases">
        <authorList>
            <consortium name="The Klebsiella pneumonia Genome Sequencing Project"/>
            <person name="McClelland M."/>
            <person name="Sanderson E.K."/>
            <person name="Spieth J."/>
            <person name="Clifton W.S."/>
            <person name="Latreille P."/>
            <person name="Sabo A."/>
            <person name="Pepin K."/>
            <person name="Bhonagiri V."/>
            <person name="Porwollik S."/>
            <person name="Ali J."/>
            <person name="Wilson R.K."/>
        </authorList>
    </citation>
    <scope>NUCLEOTIDE SEQUENCE [LARGE SCALE GENOMIC DNA]</scope>
    <source>
        <strain>ATCC 700721 / MGH 78578</strain>
    </source>
</reference>
<comment type="function">
    <text evidence="1">Catalyzes the reversible isomerization of glucose-6-phosphate to fructose-6-phosphate.</text>
</comment>
<comment type="catalytic activity">
    <reaction evidence="1">
        <text>alpha-D-glucose 6-phosphate = beta-D-fructose 6-phosphate</text>
        <dbReference type="Rhea" id="RHEA:11816"/>
        <dbReference type="ChEBI" id="CHEBI:57634"/>
        <dbReference type="ChEBI" id="CHEBI:58225"/>
        <dbReference type="EC" id="5.3.1.9"/>
    </reaction>
</comment>
<comment type="pathway">
    <text evidence="1">Carbohydrate biosynthesis; gluconeogenesis.</text>
</comment>
<comment type="pathway">
    <text evidence="1">Carbohydrate degradation; glycolysis; D-glyceraldehyde 3-phosphate and glycerone phosphate from D-glucose: step 2/4.</text>
</comment>
<comment type="subcellular location">
    <subcellularLocation>
        <location evidence="1">Cytoplasm</location>
    </subcellularLocation>
</comment>
<comment type="similarity">
    <text evidence="1">Belongs to the GPI family.</text>
</comment>
<feature type="chain" id="PRO_1000013976" description="Glucose-6-phosphate isomerase">
    <location>
        <begin position="1"/>
        <end position="549"/>
    </location>
</feature>
<feature type="active site" description="Proton donor" evidence="1">
    <location>
        <position position="355"/>
    </location>
</feature>
<feature type="active site" evidence="1">
    <location>
        <position position="386"/>
    </location>
</feature>
<feature type="active site" evidence="1">
    <location>
        <position position="514"/>
    </location>
</feature>
<evidence type="ECO:0000255" key="1">
    <source>
        <dbReference type="HAMAP-Rule" id="MF_00473"/>
    </source>
</evidence>
<gene>
    <name evidence="1" type="primary">pgi</name>
    <name type="ordered locus">KPN78578_43440</name>
    <name type="ORF">KPN_04413</name>
</gene>
<organism>
    <name type="scientific">Klebsiella pneumoniae subsp. pneumoniae (strain ATCC 700721 / MGH 78578)</name>
    <dbReference type="NCBI Taxonomy" id="272620"/>
    <lineage>
        <taxon>Bacteria</taxon>
        <taxon>Pseudomonadati</taxon>
        <taxon>Pseudomonadota</taxon>
        <taxon>Gammaproteobacteria</taxon>
        <taxon>Enterobacterales</taxon>
        <taxon>Enterobacteriaceae</taxon>
        <taxon>Klebsiella/Raoultella group</taxon>
        <taxon>Klebsiella</taxon>
        <taxon>Klebsiella pneumoniae complex</taxon>
    </lineage>
</organism>
<accession>A6TGT4</accession>
<name>G6PI_KLEP7</name>
<sequence>MKNINPTQTSAWQALQKHFDEMKDVTISELFAKDSDRFSKFSATFDDLMLVDFSKNRITEETLAKLQDLAKETDLAGAIKSMFSGEKINRTEDRAVLHVALRNRSNTPIVVDGKDVMPEVNAVLEKMKTFSEAIISGSWKGYTGKPITDVVNIGIGGSDLGPFMVTEALRPYKNHLNMHFVSNVDGTHIAEVLKNVNPETTLFLVASKTFTTQETMTNAHSARDWFLATAGDDKHVAKHFAALSTNAKAVGEFGIDTANMFEFWDWVGGRYSLWSAIGLSIILSVGFDNFVELLSGAHAMDKHFSTTPAEKNLPVLLALIGIWYNNFFGAETEAILPYDQYMHRFAAYFQQGNMESNGKYVDRNGHAVDYQTGPIIWGEPGTNGQHAFYQLIHQGTKMVPCDFIAPAITHNPLSDHHQKLLSNFFAQTEALAFGKSREVVEQEYRDQGKDPATLEHVVPFKVFEGNRPTNSILLREITPFSLGALIALYEHKIFTQGAILNIFTFDQWGVELGKQLANRILPELKDGSEVSSHDSSTNGLINRYKAWRA</sequence>